<proteinExistence type="inferred from homology"/>
<accession>Q892X1</accession>
<organism>
    <name type="scientific">Clostridium tetani (strain Massachusetts / E88)</name>
    <dbReference type="NCBI Taxonomy" id="212717"/>
    <lineage>
        <taxon>Bacteria</taxon>
        <taxon>Bacillati</taxon>
        <taxon>Bacillota</taxon>
        <taxon>Clostridia</taxon>
        <taxon>Eubacteriales</taxon>
        <taxon>Clostridiaceae</taxon>
        <taxon>Clostridium</taxon>
    </lineage>
</organism>
<evidence type="ECO:0000255" key="1">
    <source>
        <dbReference type="HAMAP-Rule" id="MF_00741"/>
    </source>
</evidence>
<dbReference type="EC" id="6.3.3.1" evidence="1"/>
<dbReference type="EMBL" id="AE015927">
    <property type="protein sequence ID" value="AAO36471.1"/>
    <property type="molecule type" value="Genomic_DNA"/>
</dbReference>
<dbReference type="RefSeq" id="WP_011100131.1">
    <property type="nucleotide sequence ID" value="NC_004557.1"/>
</dbReference>
<dbReference type="SMR" id="Q892X1"/>
<dbReference type="STRING" id="212717.CTC_01964"/>
<dbReference type="GeneID" id="24252495"/>
<dbReference type="KEGG" id="ctc:CTC_01964"/>
<dbReference type="HOGENOM" id="CLU_047116_0_0_9"/>
<dbReference type="OrthoDB" id="9802507at2"/>
<dbReference type="UniPathway" id="UPA00074">
    <property type="reaction ID" value="UER00129"/>
</dbReference>
<dbReference type="Proteomes" id="UP000001412">
    <property type="component" value="Chromosome"/>
</dbReference>
<dbReference type="GO" id="GO:0005829">
    <property type="term" value="C:cytosol"/>
    <property type="evidence" value="ECO:0007669"/>
    <property type="project" value="TreeGrafter"/>
</dbReference>
<dbReference type="GO" id="GO:0005524">
    <property type="term" value="F:ATP binding"/>
    <property type="evidence" value="ECO:0007669"/>
    <property type="project" value="UniProtKB-KW"/>
</dbReference>
<dbReference type="GO" id="GO:0004637">
    <property type="term" value="F:phosphoribosylamine-glycine ligase activity"/>
    <property type="evidence" value="ECO:0007669"/>
    <property type="project" value="TreeGrafter"/>
</dbReference>
<dbReference type="GO" id="GO:0004641">
    <property type="term" value="F:phosphoribosylformylglycinamidine cyclo-ligase activity"/>
    <property type="evidence" value="ECO:0007669"/>
    <property type="project" value="UniProtKB-UniRule"/>
</dbReference>
<dbReference type="GO" id="GO:0006189">
    <property type="term" value="P:'de novo' IMP biosynthetic process"/>
    <property type="evidence" value="ECO:0007669"/>
    <property type="project" value="UniProtKB-UniRule"/>
</dbReference>
<dbReference type="GO" id="GO:0046084">
    <property type="term" value="P:adenine biosynthetic process"/>
    <property type="evidence" value="ECO:0007669"/>
    <property type="project" value="TreeGrafter"/>
</dbReference>
<dbReference type="CDD" id="cd02196">
    <property type="entry name" value="PurM"/>
    <property type="match status" value="1"/>
</dbReference>
<dbReference type="FunFam" id="3.30.1330.10:FF:000001">
    <property type="entry name" value="Phosphoribosylformylglycinamidine cyclo-ligase"/>
    <property type="match status" value="1"/>
</dbReference>
<dbReference type="FunFam" id="3.90.650.10:FF:000011">
    <property type="entry name" value="Phosphoribosylformylglycinamidine cyclo-ligase"/>
    <property type="match status" value="1"/>
</dbReference>
<dbReference type="Gene3D" id="3.90.650.10">
    <property type="entry name" value="PurM-like C-terminal domain"/>
    <property type="match status" value="1"/>
</dbReference>
<dbReference type="Gene3D" id="3.30.1330.10">
    <property type="entry name" value="PurM-like, N-terminal domain"/>
    <property type="match status" value="1"/>
</dbReference>
<dbReference type="HAMAP" id="MF_00741">
    <property type="entry name" value="AIRS"/>
    <property type="match status" value="1"/>
</dbReference>
<dbReference type="InterPro" id="IPR010918">
    <property type="entry name" value="PurM-like_C_dom"/>
</dbReference>
<dbReference type="InterPro" id="IPR036676">
    <property type="entry name" value="PurM-like_C_sf"/>
</dbReference>
<dbReference type="InterPro" id="IPR016188">
    <property type="entry name" value="PurM-like_N"/>
</dbReference>
<dbReference type="InterPro" id="IPR036921">
    <property type="entry name" value="PurM-like_N_sf"/>
</dbReference>
<dbReference type="InterPro" id="IPR004733">
    <property type="entry name" value="PurM_cligase"/>
</dbReference>
<dbReference type="NCBIfam" id="TIGR00878">
    <property type="entry name" value="purM"/>
    <property type="match status" value="1"/>
</dbReference>
<dbReference type="PANTHER" id="PTHR10520:SF12">
    <property type="entry name" value="TRIFUNCTIONAL PURINE BIOSYNTHETIC PROTEIN ADENOSINE-3"/>
    <property type="match status" value="1"/>
</dbReference>
<dbReference type="PANTHER" id="PTHR10520">
    <property type="entry name" value="TRIFUNCTIONAL PURINE BIOSYNTHETIC PROTEIN ADENOSINE-3-RELATED"/>
    <property type="match status" value="1"/>
</dbReference>
<dbReference type="Pfam" id="PF00586">
    <property type="entry name" value="AIRS"/>
    <property type="match status" value="1"/>
</dbReference>
<dbReference type="Pfam" id="PF02769">
    <property type="entry name" value="AIRS_C"/>
    <property type="match status" value="1"/>
</dbReference>
<dbReference type="SUPFAM" id="SSF56042">
    <property type="entry name" value="PurM C-terminal domain-like"/>
    <property type="match status" value="1"/>
</dbReference>
<dbReference type="SUPFAM" id="SSF55326">
    <property type="entry name" value="PurM N-terminal domain-like"/>
    <property type="match status" value="1"/>
</dbReference>
<keyword id="KW-0067">ATP-binding</keyword>
<keyword id="KW-0963">Cytoplasm</keyword>
<keyword id="KW-0436">Ligase</keyword>
<keyword id="KW-0547">Nucleotide-binding</keyword>
<keyword id="KW-0658">Purine biosynthesis</keyword>
<keyword id="KW-1185">Reference proteome</keyword>
<feature type="chain" id="PRO_0000148207" description="Phosphoribosylformylglycinamidine cyclo-ligase">
    <location>
        <begin position="1"/>
        <end position="331"/>
    </location>
</feature>
<name>PUR5_CLOTE</name>
<protein>
    <recommendedName>
        <fullName evidence="1">Phosphoribosylformylglycinamidine cyclo-ligase</fullName>
        <ecNumber evidence="1">6.3.3.1</ecNumber>
    </recommendedName>
    <alternativeName>
        <fullName evidence="1">AIR synthase</fullName>
    </alternativeName>
    <alternativeName>
        <fullName evidence="1">AIRS</fullName>
    </alternativeName>
    <alternativeName>
        <fullName evidence="1">Phosphoribosyl-aminoimidazole synthetase</fullName>
    </alternativeName>
</protein>
<reference key="1">
    <citation type="journal article" date="2003" name="Proc. Natl. Acad. Sci. U.S.A.">
        <title>The genome sequence of Clostridium tetani, the causative agent of tetanus disease.</title>
        <authorList>
            <person name="Brueggemann H."/>
            <person name="Baeumer S."/>
            <person name="Fricke W.F."/>
            <person name="Wiezer A."/>
            <person name="Liesegang H."/>
            <person name="Decker I."/>
            <person name="Herzberg C."/>
            <person name="Martinez-Arias R."/>
            <person name="Merkl R."/>
            <person name="Henne A."/>
            <person name="Gottschalk G."/>
        </authorList>
    </citation>
    <scope>NUCLEOTIDE SEQUENCE [LARGE SCALE GENOMIC DNA]</scope>
    <source>
        <strain>Massachusetts / E88</strain>
    </source>
</reference>
<gene>
    <name evidence="1" type="primary">purM</name>
    <name type="ordered locus">CTC_01964</name>
</gene>
<sequence>MATYKDAGVNIEEGYKSVNLMKEHVQKTFNKGVLNGIGSFAAMYELGKYKNPVLVSGTDGVGTKLKIAFELEKYNTIGIDCVAMCVNDILCHGAKPLFFLDYMACGKLKGEVAADIVKGVSDGCLRAGCALIGGETAEMPGFYKEGEYDIAGFAVGIVEKENIVDGQDIKEGDVLIGIASSGVHSNGYSLVRSVIKDFREEFHGKIIGEELLTPTKIYVKPVLQLLKSYPIKGMAHITGGGFYENIPRMFKDDLNVVISKNSFPRPDIFEYIISKGIEENHMFNVFNMGIGFVLCVDPCYEKKIIEKLIEQGEKAYKIGHIEKGERKVIIK</sequence>
<comment type="catalytic activity">
    <reaction evidence="1">
        <text>2-formamido-N(1)-(5-O-phospho-beta-D-ribosyl)acetamidine + ATP = 5-amino-1-(5-phospho-beta-D-ribosyl)imidazole + ADP + phosphate + H(+)</text>
        <dbReference type="Rhea" id="RHEA:23032"/>
        <dbReference type="ChEBI" id="CHEBI:15378"/>
        <dbReference type="ChEBI" id="CHEBI:30616"/>
        <dbReference type="ChEBI" id="CHEBI:43474"/>
        <dbReference type="ChEBI" id="CHEBI:137981"/>
        <dbReference type="ChEBI" id="CHEBI:147287"/>
        <dbReference type="ChEBI" id="CHEBI:456216"/>
        <dbReference type="EC" id="6.3.3.1"/>
    </reaction>
</comment>
<comment type="pathway">
    <text evidence="1">Purine metabolism; IMP biosynthesis via de novo pathway; 5-amino-1-(5-phospho-D-ribosyl)imidazole from N(2)-formyl-N(1)-(5-phospho-D-ribosyl)glycinamide: step 2/2.</text>
</comment>
<comment type="subcellular location">
    <subcellularLocation>
        <location evidence="1">Cytoplasm</location>
    </subcellularLocation>
</comment>
<comment type="similarity">
    <text evidence="1">Belongs to the AIR synthase family.</text>
</comment>